<feature type="chain" id="PRO_1000079240" description="Chaperone protein DnaK">
    <location>
        <begin position="1"/>
        <end position="611"/>
    </location>
</feature>
<feature type="region of interest" description="Disordered" evidence="2">
    <location>
        <begin position="467"/>
        <end position="508"/>
    </location>
</feature>
<feature type="region of interest" description="Disordered" evidence="2">
    <location>
        <begin position="567"/>
        <end position="611"/>
    </location>
</feature>
<feature type="compositionally biased region" description="Basic and acidic residues" evidence="2">
    <location>
        <begin position="480"/>
        <end position="508"/>
    </location>
</feature>
<feature type="compositionally biased region" description="Polar residues" evidence="2">
    <location>
        <begin position="567"/>
        <end position="576"/>
    </location>
</feature>
<feature type="compositionally biased region" description="Low complexity" evidence="2">
    <location>
        <begin position="577"/>
        <end position="587"/>
    </location>
</feature>
<feature type="compositionally biased region" description="Acidic residues" evidence="2">
    <location>
        <begin position="599"/>
        <end position="611"/>
    </location>
</feature>
<feature type="modified residue" description="Phosphothreonine; by autocatalysis" evidence="1">
    <location>
        <position position="175"/>
    </location>
</feature>
<protein>
    <recommendedName>
        <fullName evidence="1">Chaperone protein DnaK</fullName>
    </recommendedName>
    <alternativeName>
        <fullName evidence="1">HSP70</fullName>
    </alternativeName>
    <alternativeName>
        <fullName evidence="1">Heat shock 70 kDa protein</fullName>
    </alternativeName>
    <alternativeName>
        <fullName evidence="1">Heat shock protein 70</fullName>
    </alternativeName>
</protein>
<gene>
    <name evidence="1" type="primary">dnaK</name>
    <name type="ordered locus">Sare_0112</name>
</gene>
<sequence>MARAVGIDLGTTNSCVSVLEGGEPTVIANAEGSRTTPSIVAFARNGEVLVGEVAKRQAVTNPDRTIRSVKREVGTNWSVDIDDKKYTPQEISARTLMKLKRDAESYLGEQITDAVITVPAYFNDGQRQATKEAGEIAGFNVLRIVNEPTAAALAYGLDKGSKEQTVLVFDLGGGTFDVSLLELAEGVIEVKSTSGDNLLGGDDWDQRIIDHLVKTFNGEHGIDLSQDKMAMQRLKEAAEKAKIELSAAATSNINLPYITAGAAGPLHLDVTLTRAEFQRMTQDLLDRCKGPFEQAVKDAGIKVADVEHVILVGGSTRMPAVTELVKDLTGRDPNKGVNPDEVVAVGAALQAGVLKGEVKDVLLLDVTPLSLGIETKGGIFTKLIERNTTIPTKRSEVFTTADDNQPSVLIQVFQGEREIAAYNKKLGTFELTGLPPAPRGMPQIEVTFDIDANGIVNVHAKDLGTGKEQKMTVTAGSSLPKEDIERMRRDAEEHAEEDKRRREEAETRNLAEALQWQTEKFLAESGDKLPTESRDQINEALGELRSALGGQDIEKIKSAHAQLAQVSQQAGSQLYTQQGEQAGATGAQAGGAQAGGPDDVVDAEIVDEDKK</sequence>
<accession>A8LWM4</accession>
<organism>
    <name type="scientific">Salinispora arenicola (strain CNS-205)</name>
    <dbReference type="NCBI Taxonomy" id="391037"/>
    <lineage>
        <taxon>Bacteria</taxon>
        <taxon>Bacillati</taxon>
        <taxon>Actinomycetota</taxon>
        <taxon>Actinomycetes</taxon>
        <taxon>Micromonosporales</taxon>
        <taxon>Micromonosporaceae</taxon>
        <taxon>Salinispora</taxon>
    </lineage>
</organism>
<evidence type="ECO:0000255" key="1">
    <source>
        <dbReference type="HAMAP-Rule" id="MF_00332"/>
    </source>
</evidence>
<evidence type="ECO:0000256" key="2">
    <source>
        <dbReference type="SAM" id="MobiDB-lite"/>
    </source>
</evidence>
<reference key="1">
    <citation type="submission" date="2007-10" db="EMBL/GenBank/DDBJ databases">
        <title>Complete sequence of Salinispora arenicola CNS-205.</title>
        <authorList>
            <consortium name="US DOE Joint Genome Institute"/>
            <person name="Copeland A."/>
            <person name="Lucas S."/>
            <person name="Lapidus A."/>
            <person name="Barry K."/>
            <person name="Glavina del Rio T."/>
            <person name="Dalin E."/>
            <person name="Tice H."/>
            <person name="Pitluck S."/>
            <person name="Foster B."/>
            <person name="Schmutz J."/>
            <person name="Larimer F."/>
            <person name="Land M."/>
            <person name="Hauser L."/>
            <person name="Kyrpides N."/>
            <person name="Ivanova N."/>
            <person name="Jensen P.R."/>
            <person name="Moore B.S."/>
            <person name="Penn K."/>
            <person name="Jenkins C."/>
            <person name="Udwary D."/>
            <person name="Xiang L."/>
            <person name="Gontang E."/>
            <person name="Richardson P."/>
        </authorList>
    </citation>
    <scope>NUCLEOTIDE SEQUENCE [LARGE SCALE GENOMIC DNA]</scope>
    <source>
        <strain>CNS-205</strain>
    </source>
</reference>
<dbReference type="EMBL" id="CP000850">
    <property type="protein sequence ID" value="ABV96047.1"/>
    <property type="molecule type" value="Genomic_DNA"/>
</dbReference>
<dbReference type="SMR" id="A8LWM4"/>
<dbReference type="STRING" id="391037.Sare_0112"/>
<dbReference type="KEGG" id="saq:Sare_0112"/>
<dbReference type="PATRIC" id="fig|391037.6.peg.118"/>
<dbReference type="eggNOG" id="COG0443">
    <property type="taxonomic scope" value="Bacteria"/>
</dbReference>
<dbReference type="HOGENOM" id="CLU_005965_2_1_11"/>
<dbReference type="OrthoDB" id="9766019at2"/>
<dbReference type="GO" id="GO:0005524">
    <property type="term" value="F:ATP binding"/>
    <property type="evidence" value="ECO:0007669"/>
    <property type="project" value="UniProtKB-UniRule"/>
</dbReference>
<dbReference type="GO" id="GO:0140662">
    <property type="term" value="F:ATP-dependent protein folding chaperone"/>
    <property type="evidence" value="ECO:0007669"/>
    <property type="project" value="InterPro"/>
</dbReference>
<dbReference type="GO" id="GO:0051082">
    <property type="term" value="F:unfolded protein binding"/>
    <property type="evidence" value="ECO:0007669"/>
    <property type="project" value="InterPro"/>
</dbReference>
<dbReference type="CDD" id="cd10234">
    <property type="entry name" value="ASKHA_NBD_HSP70_DnaK-like"/>
    <property type="match status" value="1"/>
</dbReference>
<dbReference type="FunFam" id="2.60.34.10:FF:000014">
    <property type="entry name" value="Chaperone protein DnaK HSP70"/>
    <property type="match status" value="1"/>
</dbReference>
<dbReference type="FunFam" id="1.20.1270.10:FF:000001">
    <property type="entry name" value="Molecular chaperone DnaK"/>
    <property type="match status" value="1"/>
</dbReference>
<dbReference type="FunFam" id="3.30.420.40:FF:000071">
    <property type="entry name" value="Molecular chaperone DnaK"/>
    <property type="match status" value="1"/>
</dbReference>
<dbReference type="FunFam" id="3.90.640.10:FF:000003">
    <property type="entry name" value="Molecular chaperone DnaK"/>
    <property type="match status" value="1"/>
</dbReference>
<dbReference type="Gene3D" id="1.20.1270.10">
    <property type="match status" value="1"/>
</dbReference>
<dbReference type="Gene3D" id="3.30.420.40">
    <property type="match status" value="2"/>
</dbReference>
<dbReference type="Gene3D" id="3.90.640.10">
    <property type="entry name" value="Actin, Chain A, domain 4"/>
    <property type="match status" value="1"/>
</dbReference>
<dbReference type="Gene3D" id="2.60.34.10">
    <property type="entry name" value="Substrate Binding Domain Of DNAk, Chain A, domain 1"/>
    <property type="match status" value="1"/>
</dbReference>
<dbReference type="HAMAP" id="MF_00332">
    <property type="entry name" value="DnaK"/>
    <property type="match status" value="1"/>
</dbReference>
<dbReference type="InterPro" id="IPR043129">
    <property type="entry name" value="ATPase_NBD"/>
</dbReference>
<dbReference type="InterPro" id="IPR012725">
    <property type="entry name" value="Chaperone_DnaK"/>
</dbReference>
<dbReference type="InterPro" id="IPR018181">
    <property type="entry name" value="Heat_shock_70_CS"/>
</dbReference>
<dbReference type="InterPro" id="IPR029048">
    <property type="entry name" value="HSP70_C_sf"/>
</dbReference>
<dbReference type="InterPro" id="IPR029047">
    <property type="entry name" value="HSP70_peptide-bd_sf"/>
</dbReference>
<dbReference type="InterPro" id="IPR013126">
    <property type="entry name" value="Hsp_70_fam"/>
</dbReference>
<dbReference type="NCBIfam" id="NF001413">
    <property type="entry name" value="PRK00290.1"/>
    <property type="match status" value="1"/>
</dbReference>
<dbReference type="NCBIfam" id="TIGR02350">
    <property type="entry name" value="prok_dnaK"/>
    <property type="match status" value="1"/>
</dbReference>
<dbReference type="PANTHER" id="PTHR19375">
    <property type="entry name" value="HEAT SHOCK PROTEIN 70KDA"/>
    <property type="match status" value="1"/>
</dbReference>
<dbReference type="Pfam" id="PF00012">
    <property type="entry name" value="HSP70"/>
    <property type="match status" value="2"/>
</dbReference>
<dbReference type="PRINTS" id="PR00301">
    <property type="entry name" value="HEATSHOCK70"/>
</dbReference>
<dbReference type="SUPFAM" id="SSF53067">
    <property type="entry name" value="Actin-like ATPase domain"/>
    <property type="match status" value="2"/>
</dbReference>
<dbReference type="SUPFAM" id="SSF100934">
    <property type="entry name" value="Heat shock protein 70kD (HSP70), C-terminal subdomain"/>
    <property type="match status" value="1"/>
</dbReference>
<dbReference type="SUPFAM" id="SSF100920">
    <property type="entry name" value="Heat shock protein 70kD (HSP70), peptide-binding domain"/>
    <property type="match status" value="1"/>
</dbReference>
<dbReference type="PROSITE" id="PS00297">
    <property type="entry name" value="HSP70_1"/>
    <property type="match status" value="1"/>
</dbReference>
<dbReference type="PROSITE" id="PS00329">
    <property type="entry name" value="HSP70_2"/>
    <property type="match status" value="1"/>
</dbReference>
<dbReference type="PROSITE" id="PS01036">
    <property type="entry name" value="HSP70_3"/>
    <property type="match status" value="1"/>
</dbReference>
<name>DNAK_SALAI</name>
<proteinExistence type="inferred from homology"/>
<comment type="function">
    <text evidence="1">Acts as a chaperone.</text>
</comment>
<comment type="induction">
    <text evidence="1">By stress conditions e.g. heat shock.</text>
</comment>
<comment type="similarity">
    <text evidence="1">Belongs to the heat shock protein 70 family.</text>
</comment>
<keyword id="KW-0067">ATP-binding</keyword>
<keyword id="KW-0143">Chaperone</keyword>
<keyword id="KW-0547">Nucleotide-binding</keyword>
<keyword id="KW-0597">Phosphoprotein</keyword>
<keyword id="KW-0346">Stress response</keyword>